<proteinExistence type="inferred from homology"/>
<keyword id="KW-0963">Cytoplasm</keyword>
<keyword id="KW-0274">FAD</keyword>
<keyword id="KW-0285">Flavoprotein</keyword>
<keyword id="KW-0520">NAD</keyword>
<keyword id="KW-1185">Reference proteome</keyword>
<keyword id="KW-0819">tRNA processing</keyword>
<comment type="function">
    <text evidence="1">NAD-binding protein involved in the addition of a carboxymethylaminomethyl (cmnm) group at the wobble position (U34) of certain tRNAs, forming tRNA-cmnm(5)s(2)U34.</text>
</comment>
<comment type="cofactor">
    <cofactor evidence="1">
        <name>FAD</name>
        <dbReference type="ChEBI" id="CHEBI:57692"/>
    </cofactor>
</comment>
<comment type="subunit">
    <text evidence="1">Homodimer. Heterotetramer of two MnmE and two MnmG subunits.</text>
</comment>
<comment type="subcellular location">
    <subcellularLocation>
        <location evidence="1">Cytoplasm</location>
    </subcellularLocation>
</comment>
<comment type="similarity">
    <text evidence="1">Belongs to the MnmG family.</text>
</comment>
<name>MNMG_HELHP</name>
<protein>
    <recommendedName>
        <fullName evidence="1">tRNA uridine 5-carboxymethylaminomethyl modification enzyme MnmG</fullName>
    </recommendedName>
    <alternativeName>
        <fullName evidence="1">Glucose-inhibited division protein A</fullName>
    </alternativeName>
</protein>
<accession>Q7VK79</accession>
<sequence length="629" mass="70070">MVIGGGHAGVEASIVSAKMGAKTHLITLLIQNIALASCNPAVGGLGKGHLVKEIDALGGVMGVITDKCGIQFRILNASKGPAVRGTRAQIDMDRYSIFAKEIALNTPNLTISQESVESLIYEQDSKGRYIVKGVTTNIGKTYFAKKVILTTGTFLRGLVHIGETKLQNGRFGEMSPQNLSNSLQDMGLTLGRLKTGTCARIDGRSIDFSALEIHNGDEKPPHFSYKTINFSPTQLPCFVTYTNENTHKIIRDNFHRAPLFTGQIEGVGPRYCPSIEDKVNRFADKSRHQLFLEPQTQEAVEYYINGLSTSLPIDVQEAVIHSIKGLENAHITRYGYAIEYDYVEPTELYHTLETKKCANLFLAGQINGTTGYEEAAAQGIMAGINATLSLQNKSFTLARNEAYIGVMIDDLVTKGTKEPYRVFTSRAEYRLLLREDNAYLRLGTYAYKFGLIDKVRYTQIMADKTHIEHTINYLQNHHITPSSSNLTMLASLGLPPISDKALLIHIVGREELDCALLRTLLTHLGITDVESMSDLAIEQIFIESKYFDYIQKQKQQIGQMRQMLQVEIPRDFIFDNIPGLSLEVIEKLKKFTPKSLFEANEISGITPASIDVLHLYIHLHHKKKSQILV</sequence>
<organism>
    <name type="scientific">Helicobacter hepaticus (strain ATCC 51449 / 3B1)</name>
    <dbReference type="NCBI Taxonomy" id="235279"/>
    <lineage>
        <taxon>Bacteria</taxon>
        <taxon>Pseudomonadati</taxon>
        <taxon>Campylobacterota</taxon>
        <taxon>Epsilonproteobacteria</taxon>
        <taxon>Campylobacterales</taxon>
        <taxon>Helicobacteraceae</taxon>
        <taxon>Helicobacter</taxon>
    </lineage>
</organism>
<feature type="chain" id="PRO_0000117111" description="tRNA uridine 5-carboxymethylaminomethyl modification enzyme MnmG">
    <location>
        <begin position="1"/>
        <end position="629"/>
    </location>
</feature>
<feature type="binding site" evidence="1">
    <location>
        <begin position="4"/>
        <end position="9"/>
    </location>
    <ligand>
        <name>FAD</name>
        <dbReference type="ChEBI" id="CHEBI:57692"/>
    </ligand>
</feature>
<feature type="binding site" evidence="1">
    <location>
        <begin position="268"/>
        <end position="282"/>
    </location>
    <ligand>
        <name>NAD(+)</name>
        <dbReference type="ChEBI" id="CHEBI:57540"/>
    </ligand>
</feature>
<evidence type="ECO:0000255" key="1">
    <source>
        <dbReference type="HAMAP-Rule" id="MF_00129"/>
    </source>
</evidence>
<reference key="1">
    <citation type="journal article" date="2003" name="Proc. Natl. Acad. Sci. U.S.A.">
        <title>The complete genome sequence of the carcinogenic bacterium Helicobacter hepaticus.</title>
        <authorList>
            <person name="Suerbaum S."/>
            <person name="Josenhans C."/>
            <person name="Sterzenbach T."/>
            <person name="Drescher B."/>
            <person name="Brandt P."/>
            <person name="Bell M."/>
            <person name="Droege M."/>
            <person name="Fartmann B."/>
            <person name="Fischer H.-P."/>
            <person name="Ge Z."/>
            <person name="Hoerster A."/>
            <person name="Holland R."/>
            <person name="Klein K."/>
            <person name="Koenig J."/>
            <person name="Macko L."/>
            <person name="Mendz G.L."/>
            <person name="Nyakatura G."/>
            <person name="Schauer D.B."/>
            <person name="Shen Z."/>
            <person name="Weber J."/>
            <person name="Frosch M."/>
            <person name="Fox J.G."/>
        </authorList>
    </citation>
    <scope>NUCLEOTIDE SEQUENCE [LARGE SCALE GENOMIC DNA]</scope>
    <source>
        <strain>ATCC 51449 / 3B1</strain>
    </source>
</reference>
<gene>
    <name evidence="1" type="primary">mnmG</name>
    <name evidence="1" type="synonym">gidA</name>
    <name type="ordered locus">HH_0013</name>
</gene>
<dbReference type="EMBL" id="AE017125">
    <property type="protein sequence ID" value="AAP76610.1"/>
    <property type="molecule type" value="Genomic_DNA"/>
</dbReference>
<dbReference type="SMR" id="Q7VK79"/>
<dbReference type="STRING" id="235279.HH_0013"/>
<dbReference type="KEGG" id="hhe:HH_0013"/>
<dbReference type="eggNOG" id="COG0445">
    <property type="taxonomic scope" value="Bacteria"/>
</dbReference>
<dbReference type="HOGENOM" id="CLU_007831_2_2_7"/>
<dbReference type="Proteomes" id="UP000002495">
    <property type="component" value="Chromosome"/>
</dbReference>
<dbReference type="GO" id="GO:0005829">
    <property type="term" value="C:cytosol"/>
    <property type="evidence" value="ECO:0007669"/>
    <property type="project" value="TreeGrafter"/>
</dbReference>
<dbReference type="GO" id="GO:0050660">
    <property type="term" value="F:flavin adenine dinucleotide binding"/>
    <property type="evidence" value="ECO:0007669"/>
    <property type="project" value="UniProtKB-UniRule"/>
</dbReference>
<dbReference type="GO" id="GO:0030488">
    <property type="term" value="P:tRNA methylation"/>
    <property type="evidence" value="ECO:0007669"/>
    <property type="project" value="TreeGrafter"/>
</dbReference>
<dbReference type="GO" id="GO:0002098">
    <property type="term" value="P:tRNA wobble uridine modification"/>
    <property type="evidence" value="ECO:0007669"/>
    <property type="project" value="InterPro"/>
</dbReference>
<dbReference type="FunFam" id="1.10.150.570:FF:000001">
    <property type="entry name" value="tRNA uridine 5-carboxymethylaminomethyl modification enzyme MnmG"/>
    <property type="match status" value="1"/>
</dbReference>
<dbReference type="FunFam" id="3.50.50.60:FF:000002">
    <property type="entry name" value="tRNA uridine 5-carboxymethylaminomethyl modification enzyme MnmG"/>
    <property type="match status" value="1"/>
</dbReference>
<dbReference type="Gene3D" id="3.50.50.60">
    <property type="entry name" value="FAD/NAD(P)-binding domain"/>
    <property type="match status" value="2"/>
</dbReference>
<dbReference type="Gene3D" id="1.10.150.570">
    <property type="entry name" value="GidA associated domain, C-terminal subdomain"/>
    <property type="match status" value="1"/>
</dbReference>
<dbReference type="Gene3D" id="1.10.10.1800">
    <property type="entry name" value="tRNA uridine 5-carboxymethylaminomethyl modification enzyme MnmG/GidA"/>
    <property type="match status" value="1"/>
</dbReference>
<dbReference type="HAMAP" id="MF_00129">
    <property type="entry name" value="MnmG_GidA"/>
    <property type="match status" value="1"/>
</dbReference>
<dbReference type="InterPro" id="IPR036188">
    <property type="entry name" value="FAD/NAD-bd_sf"/>
</dbReference>
<dbReference type="InterPro" id="IPR049312">
    <property type="entry name" value="GIDA_C_N"/>
</dbReference>
<dbReference type="InterPro" id="IPR004416">
    <property type="entry name" value="MnmG"/>
</dbReference>
<dbReference type="InterPro" id="IPR002218">
    <property type="entry name" value="MnmG-rel"/>
</dbReference>
<dbReference type="InterPro" id="IPR020595">
    <property type="entry name" value="MnmG-rel_CS"/>
</dbReference>
<dbReference type="InterPro" id="IPR026904">
    <property type="entry name" value="MnmG_C"/>
</dbReference>
<dbReference type="InterPro" id="IPR047001">
    <property type="entry name" value="MnmG_C_subdom"/>
</dbReference>
<dbReference type="InterPro" id="IPR044920">
    <property type="entry name" value="MnmG_C_subdom_sf"/>
</dbReference>
<dbReference type="InterPro" id="IPR040131">
    <property type="entry name" value="MnmG_N"/>
</dbReference>
<dbReference type="NCBIfam" id="TIGR00136">
    <property type="entry name" value="mnmG_gidA"/>
    <property type="match status" value="1"/>
</dbReference>
<dbReference type="PANTHER" id="PTHR11806">
    <property type="entry name" value="GLUCOSE INHIBITED DIVISION PROTEIN A"/>
    <property type="match status" value="1"/>
</dbReference>
<dbReference type="PANTHER" id="PTHR11806:SF0">
    <property type="entry name" value="PROTEIN MTO1 HOMOLOG, MITOCHONDRIAL"/>
    <property type="match status" value="1"/>
</dbReference>
<dbReference type="Pfam" id="PF01134">
    <property type="entry name" value="GIDA"/>
    <property type="match status" value="1"/>
</dbReference>
<dbReference type="Pfam" id="PF21680">
    <property type="entry name" value="GIDA_C_1st"/>
    <property type="match status" value="1"/>
</dbReference>
<dbReference type="Pfam" id="PF13932">
    <property type="entry name" value="SAM_GIDA_C"/>
    <property type="match status" value="1"/>
</dbReference>
<dbReference type="SMART" id="SM01228">
    <property type="entry name" value="GIDA_assoc_3"/>
    <property type="match status" value="1"/>
</dbReference>
<dbReference type="SUPFAM" id="SSF51905">
    <property type="entry name" value="FAD/NAD(P)-binding domain"/>
    <property type="match status" value="1"/>
</dbReference>
<dbReference type="PROSITE" id="PS01280">
    <property type="entry name" value="GIDA_1"/>
    <property type="match status" value="1"/>
</dbReference>
<dbReference type="PROSITE" id="PS01281">
    <property type="entry name" value="GIDA_2"/>
    <property type="match status" value="1"/>
</dbReference>